<proteinExistence type="inferred from homology"/>
<gene>
    <name evidence="1" type="primary">proA</name>
    <name type="ordered locus">lpp1574</name>
</gene>
<accession>Q5X4U9</accession>
<name>PROA_LEGPA</name>
<dbReference type="EC" id="1.2.1.41" evidence="1"/>
<dbReference type="EMBL" id="CR628336">
    <property type="protein sequence ID" value="CAH12725.1"/>
    <property type="molecule type" value="Genomic_DNA"/>
</dbReference>
<dbReference type="RefSeq" id="WP_011213887.1">
    <property type="nucleotide sequence ID" value="NC_006368.1"/>
</dbReference>
<dbReference type="SMR" id="Q5X4U9"/>
<dbReference type="KEGG" id="lpp:lpp1574"/>
<dbReference type="LegioList" id="lpp1574"/>
<dbReference type="HOGENOM" id="CLU_030231_0_0_6"/>
<dbReference type="UniPathway" id="UPA00098">
    <property type="reaction ID" value="UER00360"/>
</dbReference>
<dbReference type="GO" id="GO:0005737">
    <property type="term" value="C:cytoplasm"/>
    <property type="evidence" value="ECO:0007669"/>
    <property type="project" value="UniProtKB-SubCell"/>
</dbReference>
<dbReference type="GO" id="GO:0004350">
    <property type="term" value="F:glutamate-5-semialdehyde dehydrogenase activity"/>
    <property type="evidence" value="ECO:0007669"/>
    <property type="project" value="UniProtKB-UniRule"/>
</dbReference>
<dbReference type="GO" id="GO:0050661">
    <property type="term" value="F:NADP binding"/>
    <property type="evidence" value="ECO:0007669"/>
    <property type="project" value="InterPro"/>
</dbReference>
<dbReference type="GO" id="GO:0055129">
    <property type="term" value="P:L-proline biosynthetic process"/>
    <property type="evidence" value="ECO:0007669"/>
    <property type="project" value="UniProtKB-UniRule"/>
</dbReference>
<dbReference type="CDD" id="cd07079">
    <property type="entry name" value="ALDH_F18-19_ProA-GPR"/>
    <property type="match status" value="1"/>
</dbReference>
<dbReference type="Gene3D" id="3.40.605.10">
    <property type="entry name" value="Aldehyde Dehydrogenase, Chain A, domain 1"/>
    <property type="match status" value="1"/>
</dbReference>
<dbReference type="Gene3D" id="3.40.309.10">
    <property type="entry name" value="Aldehyde Dehydrogenase, Chain A, domain 2"/>
    <property type="match status" value="1"/>
</dbReference>
<dbReference type="HAMAP" id="MF_00412">
    <property type="entry name" value="ProA"/>
    <property type="match status" value="1"/>
</dbReference>
<dbReference type="InterPro" id="IPR016161">
    <property type="entry name" value="Ald_DH/histidinol_DH"/>
</dbReference>
<dbReference type="InterPro" id="IPR016163">
    <property type="entry name" value="Ald_DH_C"/>
</dbReference>
<dbReference type="InterPro" id="IPR016162">
    <property type="entry name" value="Ald_DH_N"/>
</dbReference>
<dbReference type="InterPro" id="IPR020593">
    <property type="entry name" value="G-glutamylP_reductase_CS"/>
</dbReference>
<dbReference type="InterPro" id="IPR012134">
    <property type="entry name" value="Glu-5-SA_DH"/>
</dbReference>
<dbReference type="InterPro" id="IPR000965">
    <property type="entry name" value="GPR_dom"/>
</dbReference>
<dbReference type="NCBIfam" id="NF001221">
    <property type="entry name" value="PRK00197.1"/>
    <property type="match status" value="1"/>
</dbReference>
<dbReference type="NCBIfam" id="TIGR00407">
    <property type="entry name" value="proA"/>
    <property type="match status" value="1"/>
</dbReference>
<dbReference type="PANTHER" id="PTHR11063:SF8">
    <property type="entry name" value="DELTA-1-PYRROLINE-5-CARBOXYLATE SYNTHASE"/>
    <property type="match status" value="1"/>
</dbReference>
<dbReference type="PANTHER" id="PTHR11063">
    <property type="entry name" value="GLUTAMATE SEMIALDEHYDE DEHYDROGENASE"/>
    <property type="match status" value="1"/>
</dbReference>
<dbReference type="PIRSF" id="PIRSF000151">
    <property type="entry name" value="GPR"/>
    <property type="match status" value="1"/>
</dbReference>
<dbReference type="SUPFAM" id="SSF53720">
    <property type="entry name" value="ALDH-like"/>
    <property type="match status" value="1"/>
</dbReference>
<dbReference type="PROSITE" id="PS01223">
    <property type="entry name" value="PROA"/>
    <property type="match status" value="1"/>
</dbReference>
<sequence length="417" mass="46171">MNTDIANQLRVAKKATTDLNLIQSDTRTIILKTLAANLEKHIENIIQENQKDLSLMLEQDPRYDRLLLNKERILSLANDVRKVASLPNPLGVNLLEKSMPNGLSIKKITVPLGVIAVIYESRPNVTIDIFSLCFKSGNVCILKGGKEAHFTNSYLLLLIKNTLKNFNINTDIVCLLPPERALITPLLNATGLVDLCIPRGSQNLINFVRDNAKIPVIETGAGIVHTYFDKSGDLEKGKKIINNAKTRRVSVCNALDTLIIHADRLKDLPELVETLSQKNVIIYADQDAYQVLDKNYPEQLLMKAKPQDFGHEFLDYKLAIKTVPNIKAAIDHIQQFSSYHSEAVIAEDESAIDKFLTEVDAAAVYANASTAFTDGGEFGLGAEIGISTQKVHARGPMGLEALTSYKWVIRGTGQIRD</sequence>
<feature type="chain" id="PRO_0000189738" description="Gamma-glutamyl phosphate reductase">
    <location>
        <begin position="1"/>
        <end position="417"/>
    </location>
</feature>
<comment type="function">
    <text evidence="1">Catalyzes the NADPH-dependent reduction of L-glutamate 5-phosphate into L-glutamate 5-semialdehyde and phosphate. The product spontaneously undergoes cyclization to form 1-pyrroline-5-carboxylate.</text>
</comment>
<comment type="catalytic activity">
    <reaction evidence="1">
        <text>L-glutamate 5-semialdehyde + phosphate + NADP(+) = L-glutamyl 5-phosphate + NADPH + H(+)</text>
        <dbReference type="Rhea" id="RHEA:19541"/>
        <dbReference type="ChEBI" id="CHEBI:15378"/>
        <dbReference type="ChEBI" id="CHEBI:43474"/>
        <dbReference type="ChEBI" id="CHEBI:57783"/>
        <dbReference type="ChEBI" id="CHEBI:58066"/>
        <dbReference type="ChEBI" id="CHEBI:58274"/>
        <dbReference type="ChEBI" id="CHEBI:58349"/>
        <dbReference type="EC" id="1.2.1.41"/>
    </reaction>
</comment>
<comment type="pathway">
    <text evidence="1">Amino-acid biosynthesis; L-proline biosynthesis; L-glutamate 5-semialdehyde from L-glutamate: step 2/2.</text>
</comment>
<comment type="subcellular location">
    <subcellularLocation>
        <location evidence="1">Cytoplasm</location>
    </subcellularLocation>
</comment>
<comment type="similarity">
    <text evidence="1">Belongs to the gamma-glutamyl phosphate reductase family.</text>
</comment>
<keyword id="KW-0028">Amino-acid biosynthesis</keyword>
<keyword id="KW-0963">Cytoplasm</keyword>
<keyword id="KW-0521">NADP</keyword>
<keyword id="KW-0560">Oxidoreductase</keyword>
<keyword id="KW-0641">Proline biosynthesis</keyword>
<reference key="1">
    <citation type="journal article" date="2004" name="Nat. Genet.">
        <title>Evidence in the Legionella pneumophila genome for exploitation of host cell functions and high genome plasticity.</title>
        <authorList>
            <person name="Cazalet C."/>
            <person name="Rusniok C."/>
            <person name="Brueggemann H."/>
            <person name="Zidane N."/>
            <person name="Magnier A."/>
            <person name="Ma L."/>
            <person name="Tichit M."/>
            <person name="Jarraud S."/>
            <person name="Bouchier C."/>
            <person name="Vandenesch F."/>
            <person name="Kunst F."/>
            <person name="Etienne J."/>
            <person name="Glaser P."/>
            <person name="Buchrieser C."/>
        </authorList>
    </citation>
    <scope>NUCLEOTIDE SEQUENCE [LARGE SCALE GENOMIC DNA]</scope>
    <source>
        <strain>Paris</strain>
    </source>
</reference>
<protein>
    <recommendedName>
        <fullName evidence="1">Gamma-glutamyl phosphate reductase</fullName>
        <shortName evidence="1">GPR</shortName>
        <ecNumber evidence="1">1.2.1.41</ecNumber>
    </recommendedName>
    <alternativeName>
        <fullName evidence="1">Glutamate-5-semialdehyde dehydrogenase</fullName>
    </alternativeName>
    <alternativeName>
        <fullName evidence="1">Glutamyl-gamma-semialdehyde dehydrogenase</fullName>
        <shortName evidence="1">GSA dehydrogenase</shortName>
    </alternativeName>
</protein>
<organism>
    <name type="scientific">Legionella pneumophila (strain Paris)</name>
    <dbReference type="NCBI Taxonomy" id="297246"/>
    <lineage>
        <taxon>Bacteria</taxon>
        <taxon>Pseudomonadati</taxon>
        <taxon>Pseudomonadota</taxon>
        <taxon>Gammaproteobacteria</taxon>
        <taxon>Legionellales</taxon>
        <taxon>Legionellaceae</taxon>
        <taxon>Legionella</taxon>
    </lineage>
</organism>
<evidence type="ECO:0000255" key="1">
    <source>
        <dbReference type="HAMAP-Rule" id="MF_00412"/>
    </source>
</evidence>